<organism>
    <name type="scientific">Escherichia coli O7:K1 (strain IAI39 / ExPEC)</name>
    <dbReference type="NCBI Taxonomy" id="585057"/>
    <lineage>
        <taxon>Bacteria</taxon>
        <taxon>Pseudomonadati</taxon>
        <taxon>Pseudomonadota</taxon>
        <taxon>Gammaproteobacteria</taxon>
        <taxon>Enterobacterales</taxon>
        <taxon>Enterobacteriaceae</taxon>
        <taxon>Escherichia</taxon>
    </lineage>
</organism>
<keyword id="KW-0028">Amino-acid biosynthesis</keyword>
<keyword id="KW-0479">Metal-binding</keyword>
<keyword id="KW-0486">Methionine biosynthesis</keyword>
<keyword id="KW-0489">Methyltransferase</keyword>
<keyword id="KW-0677">Repeat</keyword>
<keyword id="KW-0808">Transferase</keyword>
<keyword id="KW-0862">Zinc</keyword>
<reference key="1">
    <citation type="journal article" date="2009" name="PLoS Genet.">
        <title>Organised genome dynamics in the Escherichia coli species results in highly diverse adaptive paths.</title>
        <authorList>
            <person name="Touchon M."/>
            <person name="Hoede C."/>
            <person name="Tenaillon O."/>
            <person name="Barbe V."/>
            <person name="Baeriswyl S."/>
            <person name="Bidet P."/>
            <person name="Bingen E."/>
            <person name="Bonacorsi S."/>
            <person name="Bouchier C."/>
            <person name="Bouvet O."/>
            <person name="Calteau A."/>
            <person name="Chiapello H."/>
            <person name="Clermont O."/>
            <person name="Cruveiller S."/>
            <person name="Danchin A."/>
            <person name="Diard M."/>
            <person name="Dossat C."/>
            <person name="Karoui M.E."/>
            <person name="Frapy E."/>
            <person name="Garry L."/>
            <person name="Ghigo J.M."/>
            <person name="Gilles A.M."/>
            <person name="Johnson J."/>
            <person name="Le Bouguenec C."/>
            <person name="Lescat M."/>
            <person name="Mangenot S."/>
            <person name="Martinez-Jehanne V."/>
            <person name="Matic I."/>
            <person name="Nassif X."/>
            <person name="Oztas S."/>
            <person name="Petit M.A."/>
            <person name="Pichon C."/>
            <person name="Rouy Z."/>
            <person name="Ruf C.S."/>
            <person name="Schneider D."/>
            <person name="Tourret J."/>
            <person name="Vacherie B."/>
            <person name="Vallenet D."/>
            <person name="Medigue C."/>
            <person name="Rocha E.P.C."/>
            <person name="Denamur E."/>
        </authorList>
    </citation>
    <scope>NUCLEOTIDE SEQUENCE [LARGE SCALE GENOMIC DNA]</scope>
    <source>
        <strain>IAI39 / ExPEC</strain>
    </source>
</reference>
<sequence length="753" mass="84592">MTILNHTLGFPRVGLRRELKKAQESYWAGNSTREELLAVGRELRARHWDQQKQAGIDLLPVGDFAWYDHVLTTSLLLGNVPARHQNNDGSVDIDTLFRIGRGRAPTGEPAAAAEMTKWFNTNYHYMVPEFVKGQQFKLTWTQLLEEVDEALALGHKVKPVLLGPVTYLWLGKVKGEQFDRLSLLNDILPVYQQVLAELAKRGIEWVQIDEPALVLELPQAWLDAYKPAYDALQGQVKLLLTTYFEGVTPNLDTITALPVQGLHVDLVHGKDDVAELHKRLPSEWLLSAGLINGRNVWRADLTEKYAQIKDIVGKRDLWVASSCSLLHSPIDLSVETRLDAEVKSWFAFALQKCHELALLRDALNSGDTAALAAWSAPIQARRHSTRVHNPAVEKRLAAITAQDSQRANVYEVRAEAQRARFKLPAWPTTTIGSFPQTTEIRTLRLDFKKGNLDANNYRTGIAEHIKQAIVEQERLGLDVLVHGEAERNDMVEYFGEHLDGFVFTQNGWVQSYGSRCVKPPIVIGDVSRPAPITVEWAKYAQSLTDKPVKGMLTGPVTILCWSFPREDVSRETIAKQIALALRDEVADLEAAGIGIIQIDEPALREGLPLRRSDWDAYLQWGVEAFRINAAVAKDDTQIHTHMCYCEFNDIMDSIAALDADVITIETSRSDMELLESFEEFDYPNEIGPGVYDIHSPNVPSVEWIEALLKKAAKRIPAERLWVNPDCGLKTRGWPETRAALANMVQAAQNLRRG</sequence>
<feature type="chain" id="PRO_1000191200" description="5-methyltetrahydropteroyltriglutamate--homocysteine methyltransferase">
    <location>
        <begin position="1"/>
        <end position="753"/>
    </location>
</feature>
<feature type="active site" description="Proton donor" evidence="1">
    <location>
        <position position="694"/>
    </location>
</feature>
<feature type="binding site" evidence="1">
    <location>
        <begin position="17"/>
        <end position="20"/>
    </location>
    <ligand>
        <name>5-methyltetrahydropteroyltri-L-glutamate</name>
        <dbReference type="ChEBI" id="CHEBI:58207"/>
    </ligand>
</feature>
<feature type="binding site" evidence="1">
    <location>
        <position position="117"/>
    </location>
    <ligand>
        <name>5-methyltetrahydropteroyltri-L-glutamate</name>
        <dbReference type="ChEBI" id="CHEBI:58207"/>
    </ligand>
</feature>
<feature type="binding site" evidence="1">
    <location>
        <begin position="431"/>
        <end position="433"/>
    </location>
    <ligand>
        <name>L-homocysteine</name>
        <dbReference type="ChEBI" id="CHEBI:58199"/>
    </ligand>
</feature>
<feature type="binding site" evidence="1">
    <location>
        <begin position="431"/>
        <end position="433"/>
    </location>
    <ligand>
        <name>L-methionine</name>
        <dbReference type="ChEBI" id="CHEBI:57844"/>
    </ligand>
</feature>
<feature type="binding site" evidence="1">
    <location>
        <position position="484"/>
    </location>
    <ligand>
        <name>L-homocysteine</name>
        <dbReference type="ChEBI" id="CHEBI:58199"/>
    </ligand>
</feature>
<feature type="binding site" evidence="1">
    <location>
        <position position="484"/>
    </location>
    <ligand>
        <name>L-methionine</name>
        <dbReference type="ChEBI" id="CHEBI:57844"/>
    </ligand>
</feature>
<feature type="binding site" evidence="1">
    <location>
        <begin position="515"/>
        <end position="516"/>
    </location>
    <ligand>
        <name>5-methyltetrahydropteroyltri-L-glutamate</name>
        <dbReference type="ChEBI" id="CHEBI:58207"/>
    </ligand>
</feature>
<feature type="binding site" evidence="1">
    <location>
        <position position="561"/>
    </location>
    <ligand>
        <name>5-methyltetrahydropteroyltri-L-glutamate</name>
        <dbReference type="ChEBI" id="CHEBI:58207"/>
    </ligand>
</feature>
<feature type="binding site" evidence="1">
    <location>
        <position position="599"/>
    </location>
    <ligand>
        <name>L-homocysteine</name>
        <dbReference type="ChEBI" id="CHEBI:58199"/>
    </ligand>
</feature>
<feature type="binding site" evidence="1">
    <location>
        <position position="599"/>
    </location>
    <ligand>
        <name>L-methionine</name>
        <dbReference type="ChEBI" id="CHEBI:57844"/>
    </ligand>
</feature>
<feature type="binding site" evidence="1">
    <location>
        <position position="605"/>
    </location>
    <ligand>
        <name>5-methyltetrahydropteroyltri-L-glutamate</name>
        <dbReference type="ChEBI" id="CHEBI:58207"/>
    </ligand>
</feature>
<feature type="binding site" evidence="1">
    <location>
        <position position="641"/>
    </location>
    <ligand>
        <name>Zn(2+)</name>
        <dbReference type="ChEBI" id="CHEBI:29105"/>
        <note>catalytic</note>
    </ligand>
</feature>
<feature type="binding site" evidence="1">
    <location>
        <position position="643"/>
    </location>
    <ligand>
        <name>Zn(2+)</name>
        <dbReference type="ChEBI" id="CHEBI:29105"/>
        <note>catalytic</note>
    </ligand>
</feature>
<feature type="binding site" evidence="1">
    <location>
        <position position="665"/>
    </location>
    <ligand>
        <name>Zn(2+)</name>
        <dbReference type="ChEBI" id="CHEBI:29105"/>
        <note>catalytic</note>
    </ligand>
</feature>
<feature type="binding site" evidence="1">
    <location>
        <position position="726"/>
    </location>
    <ligand>
        <name>Zn(2+)</name>
        <dbReference type="ChEBI" id="CHEBI:29105"/>
        <note>catalytic</note>
    </ligand>
</feature>
<proteinExistence type="inferred from homology"/>
<dbReference type="EC" id="2.1.1.14" evidence="1"/>
<dbReference type="EMBL" id="CU928164">
    <property type="protein sequence ID" value="CAR19299.1"/>
    <property type="molecule type" value="Genomic_DNA"/>
</dbReference>
<dbReference type="RefSeq" id="WP_000153931.1">
    <property type="nucleotide sequence ID" value="NC_011750.1"/>
</dbReference>
<dbReference type="RefSeq" id="YP_002409107.1">
    <property type="nucleotide sequence ID" value="NC_011750.1"/>
</dbReference>
<dbReference type="SMR" id="B7NV51"/>
<dbReference type="STRING" id="585057.ECIAI39_3180"/>
<dbReference type="KEGG" id="ect:ECIAI39_3180"/>
<dbReference type="PATRIC" id="fig|585057.6.peg.3301"/>
<dbReference type="HOGENOM" id="CLU_013175_0_0_6"/>
<dbReference type="UniPathway" id="UPA00051">
    <property type="reaction ID" value="UER00082"/>
</dbReference>
<dbReference type="Proteomes" id="UP000000749">
    <property type="component" value="Chromosome"/>
</dbReference>
<dbReference type="GO" id="GO:0003871">
    <property type="term" value="F:5-methyltetrahydropteroyltriglutamate-homocysteine S-methyltransferase activity"/>
    <property type="evidence" value="ECO:0007669"/>
    <property type="project" value="UniProtKB-UniRule"/>
</dbReference>
<dbReference type="GO" id="GO:0008270">
    <property type="term" value="F:zinc ion binding"/>
    <property type="evidence" value="ECO:0007669"/>
    <property type="project" value="InterPro"/>
</dbReference>
<dbReference type="GO" id="GO:0009086">
    <property type="term" value="P:methionine biosynthetic process"/>
    <property type="evidence" value="ECO:0007669"/>
    <property type="project" value="UniProtKB-UniRule"/>
</dbReference>
<dbReference type="GO" id="GO:0032259">
    <property type="term" value="P:methylation"/>
    <property type="evidence" value="ECO:0007669"/>
    <property type="project" value="UniProtKB-KW"/>
</dbReference>
<dbReference type="CDD" id="cd03311">
    <property type="entry name" value="CIMS_C_terminal_like"/>
    <property type="match status" value="1"/>
</dbReference>
<dbReference type="CDD" id="cd03312">
    <property type="entry name" value="CIMS_N_terminal_like"/>
    <property type="match status" value="1"/>
</dbReference>
<dbReference type="FunFam" id="3.20.20.210:FF:000002">
    <property type="entry name" value="5-methyltetrahydropteroyltriglutamate--homocysteine methyltransferase"/>
    <property type="match status" value="1"/>
</dbReference>
<dbReference type="FunFam" id="3.20.20.210:FF:000003">
    <property type="entry name" value="5-methyltetrahydropteroyltriglutamate--homocysteine methyltransferase"/>
    <property type="match status" value="1"/>
</dbReference>
<dbReference type="Gene3D" id="3.20.20.210">
    <property type="match status" value="2"/>
</dbReference>
<dbReference type="HAMAP" id="MF_00172">
    <property type="entry name" value="Meth_synth"/>
    <property type="match status" value="1"/>
</dbReference>
<dbReference type="InterPro" id="IPR013215">
    <property type="entry name" value="Cbl-indep_Met_Synth_N"/>
</dbReference>
<dbReference type="InterPro" id="IPR006276">
    <property type="entry name" value="Cobalamin-indep_Met_synthase"/>
</dbReference>
<dbReference type="InterPro" id="IPR002629">
    <property type="entry name" value="Met_Synth_C/arc"/>
</dbReference>
<dbReference type="InterPro" id="IPR038071">
    <property type="entry name" value="UROD/MetE-like_sf"/>
</dbReference>
<dbReference type="NCBIfam" id="TIGR01371">
    <property type="entry name" value="met_syn_B12ind"/>
    <property type="match status" value="1"/>
</dbReference>
<dbReference type="NCBIfam" id="NF003556">
    <property type="entry name" value="PRK05222.1"/>
    <property type="match status" value="1"/>
</dbReference>
<dbReference type="PANTHER" id="PTHR30519">
    <property type="entry name" value="5-METHYLTETRAHYDROPTEROYLTRIGLUTAMATE--HOMOCYSTEINE METHYLTRANSFERASE"/>
    <property type="match status" value="1"/>
</dbReference>
<dbReference type="Pfam" id="PF08267">
    <property type="entry name" value="Meth_synt_1"/>
    <property type="match status" value="1"/>
</dbReference>
<dbReference type="Pfam" id="PF01717">
    <property type="entry name" value="Meth_synt_2"/>
    <property type="match status" value="1"/>
</dbReference>
<dbReference type="PIRSF" id="PIRSF000382">
    <property type="entry name" value="MeTrfase_B12_ind"/>
    <property type="match status" value="1"/>
</dbReference>
<dbReference type="SUPFAM" id="SSF51726">
    <property type="entry name" value="UROD/MetE-like"/>
    <property type="match status" value="2"/>
</dbReference>
<evidence type="ECO:0000255" key="1">
    <source>
        <dbReference type="HAMAP-Rule" id="MF_00172"/>
    </source>
</evidence>
<protein>
    <recommendedName>
        <fullName evidence="1">5-methyltetrahydropteroyltriglutamate--homocysteine methyltransferase</fullName>
        <ecNumber evidence="1">2.1.1.14</ecNumber>
    </recommendedName>
    <alternativeName>
        <fullName evidence="1">Cobalamin-independent methionine synthase</fullName>
    </alternativeName>
    <alternativeName>
        <fullName evidence="1">Methionine synthase, vitamin-B12 independent isozyme</fullName>
    </alternativeName>
</protein>
<accession>B7NV51</accession>
<comment type="function">
    <text evidence="1">Catalyzes the transfer of a methyl group from 5-methyltetrahydrofolate to homocysteine resulting in methionine formation.</text>
</comment>
<comment type="catalytic activity">
    <reaction evidence="1">
        <text>5-methyltetrahydropteroyltri-L-glutamate + L-homocysteine = tetrahydropteroyltri-L-glutamate + L-methionine</text>
        <dbReference type="Rhea" id="RHEA:21196"/>
        <dbReference type="ChEBI" id="CHEBI:57844"/>
        <dbReference type="ChEBI" id="CHEBI:58140"/>
        <dbReference type="ChEBI" id="CHEBI:58199"/>
        <dbReference type="ChEBI" id="CHEBI:58207"/>
        <dbReference type="EC" id="2.1.1.14"/>
    </reaction>
</comment>
<comment type="cofactor">
    <cofactor evidence="1">
        <name>Zn(2+)</name>
        <dbReference type="ChEBI" id="CHEBI:29105"/>
    </cofactor>
    <text evidence="1">Binds 1 zinc ion per subunit.</text>
</comment>
<comment type="pathway">
    <text evidence="1">Amino-acid biosynthesis; L-methionine biosynthesis via de novo pathway; L-methionine from L-homocysteine (MetE route): step 1/1.</text>
</comment>
<comment type="similarity">
    <text evidence="1">Belongs to the vitamin-B12 independent methionine synthase family.</text>
</comment>
<gene>
    <name evidence="1" type="primary">metE</name>
    <name type="ordered locus">ECIAI39_3180</name>
</gene>
<name>METE_ECO7I</name>